<dbReference type="EMBL" id="CP000438">
    <property type="protein sequence ID" value="ABJ14405.1"/>
    <property type="status" value="ALT_INIT"/>
    <property type="molecule type" value="Genomic_DNA"/>
</dbReference>
<dbReference type="RefSeq" id="WP_003095795.1">
    <property type="nucleotide sequence ID" value="NZ_CP034244.1"/>
</dbReference>
<dbReference type="SMR" id="Q02EZ6"/>
<dbReference type="KEGG" id="pau:PA14_66380"/>
<dbReference type="PseudoCAP" id="PA14_66380"/>
<dbReference type="HOGENOM" id="CLU_005912_9_2_6"/>
<dbReference type="BioCyc" id="PAER208963:G1G74-5601-MONOMER"/>
<dbReference type="Proteomes" id="UP000000653">
    <property type="component" value="Chromosome"/>
</dbReference>
<dbReference type="GO" id="GO:0005886">
    <property type="term" value="C:plasma membrane"/>
    <property type="evidence" value="ECO:0007669"/>
    <property type="project" value="UniProtKB-SubCell"/>
</dbReference>
<dbReference type="GO" id="GO:0050660">
    <property type="term" value="F:flavin adenine dinucleotide binding"/>
    <property type="evidence" value="ECO:0007669"/>
    <property type="project" value="InterPro"/>
</dbReference>
<dbReference type="GO" id="GO:0015386">
    <property type="term" value="F:potassium:proton antiporter activity"/>
    <property type="evidence" value="ECO:0007669"/>
    <property type="project" value="UniProtKB-UniRule"/>
</dbReference>
<dbReference type="GO" id="GO:0006884">
    <property type="term" value="P:cell volume homeostasis"/>
    <property type="evidence" value="ECO:0007669"/>
    <property type="project" value="InterPro"/>
</dbReference>
<dbReference type="Gene3D" id="1.20.1530.20">
    <property type="match status" value="1"/>
</dbReference>
<dbReference type="Gene3D" id="3.30.465.10">
    <property type="match status" value="1"/>
</dbReference>
<dbReference type="Gene3D" id="3.30.70.1450">
    <property type="entry name" value="Regulator of K+ conductance, C-terminal domain"/>
    <property type="match status" value="1"/>
</dbReference>
<dbReference type="HAMAP" id="MF_01075">
    <property type="entry name" value="NhaP2"/>
    <property type="match status" value="1"/>
</dbReference>
<dbReference type="InterPro" id="IPR006153">
    <property type="entry name" value="Cation/H_exchanger_TM"/>
</dbReference>
<dbReference type="InterPro" id="IPR036318">
    <property type="entry name" value="FAD-bd_PCMH-like_sf"/>
</dbReference>
<dbReference type="InterPro" id="IPR016169">
    <property type="entry name" value="FAD-bd_PCMH_sub2"/>
</dbReference>
<dbReference type="InterPro" id="IPR038770">
    <property type="entry name" value="Na+/solute_symporter_sf"/>
</dbReference>
<dbReference type="InterPro" id="IPR023729">
    <property type="entry name" value="NhaP2"/>
</dbReference>
<dbReference type="InterPro" id="IPR006037">
    <property type="entry name" value="RCK_C"/>
</dbReference>
<dbReference type="InterPro" id="IPR036721">
    <property type="entry name" value="RCK_C_sf"/>
</dbReference>
<dbReference type="InterPro" id="IPR005170">
    <property type="entry name" value="Transptr-assoc_dom"/>
</dbReference>
<dbReference type="NCBIfam" id="NF003714">
    <property type="entry name" value="PRK05326.1-1"/>
    <property type="match status" value="1"/>
</dbReference>
<dbReference type="NCBIfam" id="NF003715">
    <property type="entry name" value="PRK05326.1-2"/>
    <property type="match status" value="1"/>
</dbReference>
<dbReference type="NCBIfam" id="NF003716">
    <property type="entry name" value="PRK05326.1-3"/>
    <property type="match status" value="1"/>
</dbReference>
<dbReference type="PANTHER" id="PTHR32507:SF7">
    <property type="entry name" value="K(+)_H(+) ANTIPORTER NHAP2"/>
    <property type="match status" value="1"/>
</dbReference>
<dbReference type="PANTHER" id="PTHR32507">
    <property type="entry name" value="NA(+)/H(+) ANTIPORTER 1"/>
    <property type="match status" value="1"/>
</dbReference>
<dbReference type="Pfam" id="PF03471">
    <property type="entry name" value="CorC_HlyC"/>
    <property type="match status" value="1"/>
</dbReference>
<dbReference type="Pfam" id="PF00999">
    <property type="entry name" value="Na_H_Exchanger"/>
    <property type="match status" value="1"/>
</dbReference>
<dbReference type="Pfam" id="PF02080">
    <property type="entry name" value="TrkA_C"/>
    <property type="match status" value="1"/>
</dbReference>
<dbReference type="SMART" id="SM01091">
    <property type="entry name" value="CorC_HlyC"/>
    <property type="match status" value="1"/>
</dbReference>
<dbReference type="SUPFAM" id="SSF56176">
    <property type="entry name" value="FAD-binding/transporter-associated domain-like"/>
    <property type="match status" value="1"/>
</dbReference>
<dbReference type="SUPFAM" id="SSF116726">
    <property type="entry name" value="TrkA C-terminal domain-like"/>
    <property type="match status" value="1"/>
</dbReference>
<dbReference type="PROSITE" id="PS51202">
    <property type="entry name" value="RCK_C"/>
    <property type="match status" value="1"/>
</dbReference>
<reference key="1">
    <citation type="journal article" date="2006" name="Genome Biol.">
        <title>Genomic analysis reveals that Pseudomonas aeruginosa virulence is combinatorial.</title>
        <authorList>
            <person name="Lee D.G."/>
            <person name="Urbach J.M."/>
            <person name="Wu G."/>
            <person name="Liberati N.T."/>
            <person name="Feinbaum R.L."/>
            <person name="Miyata S."/>
            <person name="Diggins L.T."/>
            <person name="He J."/>
            <person name="Saucier M."/>
            <person name="Deziel E."/>
            <person name="Friedman L."/>
            <person name="Li L."/>
            <person name="Grills G."/>
            <person name="Montgomery K."/>
            <person name="Kucherlapati R."/>
            <person name="Rahme L.G."/>
            <person name="Ausubel F.M."/>
        </authorList>
    </citation>
    <scope>NUCLEOTIDE SEQUENCE [LARGE SCALE GENOMIC DNA]</scope>
    <source>
        <strain>UCBPP-PA14</strain>
    </source>
</reference>
<proteinExistence type="inferred from homology"/>
<protein>
    <recommendedName>
        <fullName evidence="1">K(+)/H(+) antiporter NhaP2</fullName>
    </recommendedName>
    <alternativeName>
        <fullName evidence="1">Potassium/proton antiporter NhaP2</fullName>
    </alternativeName>
</protein>
<evidence type="ECO:0000255" key="1">
    <source>
        <dbReference type="HAMAP-Rule" id="MF_01075"/>
    </source>
</evidence>
<evidence type="ECO:0000305" key="2"/>
<name>NHAP2_PSEAB</name>
<organism>
    <name type="scientific">Pseudomonas aeruginosa (strain UCBPP-PA14)</name>
    <dbReference type="NCBI Taxonomy" id="208963"/>
    <lineage>
        <taxon>Bacteria</taxon>
        <taxon>Pseudomonadati</taxon>
        <taxon>Pseudomonadota</taxon>
        <taxon>Gammaproteobacteria</taxon>
        <taxon>Pseudomonadales</taxon>
        <taxon>Pseudomonadaceae</taxon>
        <taxon>Pseudomonas</taxon>
    </lineage>
</organism>
<gene>
    <name evidence="1" type="primary">nhaP2</name>
    <name type="synonym">cvrA</name>
    <name type="ordered locus">PA14_66380</name>
</gene>
<accession>Q02EZ6</accession>
<sequence>MDAVTVNNFFLIGAVLVGMSILVSSLSSRLGIPILVIFLAVGMIAGNDGVGGIVFDNYPVAYLVGNLALAVILLDGGLRTRVSSFRVALWPALSLATLGVLVTTGLTGIAAAWLFDLHWMEGLLIGAIVGSTDAAAVFSLLGGKGLNERVTATLEIESGSNDPMAVFLTVTLIEMLASGQTGLSWGFVLHLVQQFGLGALLGLGGGWLLLQLINRMHLAGGLYPLLVISGGLLVFALANAVGGSGILAIYLCGLLLGNRPIRSRHGILHMLDGMAWLAQIGMFLVLGLLVTPHDLWPIALPALALALWMILVARPLSVLIGLIPFRAFHDREKAFIAWVGLRGAVPIILAVFPLMAGLPNAQLFFNVAFFIVLVSLLVQGTSLPWAARLLRVVVPPDPAPISRAGLEIHPTSEWELFVYHLNKEKWCIGAALRELKMPGGTRIAALFRGTELLHPSGSTILEADDILCVIGHEHDLPALGKLFSQAPDRGLGARFFGDFVLEGDAQLSAVASLYGLKLDGIDGEQALGRFIAHEIGGEAVIGDQVEWNGLTWTVAALEGNRIRKVGVKFPEGRPGPGLFL</sequence>
<feature type="chain" id="PRO_0000278156" description="K(+)/H(+) antiporter NhaP2">
    <location>
        <begin position="1"/>
        <end position="580"/>
    </location>
</feature>
<feature type="transmembrane region" description="Helical" evidence="1">
    <location>
        <begin position="3"/>
        <end position="23"/>
    </location>
</feature>
<feature type="transmembrane region" description="Helical" evidence="1">
    <location>
        <begin position="34"/>
        <end position="54"/>
    </location>
</feature>
<feature type="transmembrane region" description="Helical" evidence="1">
    <location>
        <begin position="58"/>
        <end position="78"/>
    </location>
</feature>
<feature type="transmembrane region" description="Helical" evidence="1">
    <location>
        <begin position="95"/>
        <end position="115"/>
    </location>
</feature>
<feature type="transmembrane region" description="Helical" evidence="1">
    <location>
        <begin position="122"/>
        <end position="142"/>
    </location>
</feature>
<feature type="transmembrane region" description="Helical" evidence="1">
    <location>
        <begin position="163"/>
        <end position="183"/>
    </location>
</feature>
<feature type="transmembrane region" description="Helical" evidence="1">
    <location>
        <begin position="185"/>
        <end position="205"/>
    </location>
</feature>
<feature type="transmembrane region" description="Helical" evidence="1">
    <location>
        <begin position="218"/>
        <end position="238"/>
    </location>
</feature>
<feature type="transmembrane region" description="Helical" evidence="1">
    <location>
        <begin position="241"/>
        <end position="261"/>
    </location>
</feature>
<feature type="transmembrane region" description="Helical" evidence="1">
    <location>
        <begin position="270"/>
        <end position="290"/>
    </location>
</feature>
<feature type="transmembrane region" description="Helical" evidence="1">
    <location>
        <begin position="303"/>
        <end position="323"/>
    </location>
</feature>
<feature type="transmembrane region" description="Helical" evidence="1">
    <location>
        <begin position="335"/>
        <end position="355"/>
    </location>
</feature>
<feature type="transmembrane region" description="Helical" evidence="1">
    <location>
        <begin position="363"/>
        <end position="383"/>
    </location>
</feature>
<feature type="domain" description="RCK C-terminal" evidence="1">
    <location>
        <begin position="403"/>
        <end position="485"/>
    </location>
</feature>
<keyword id="KW-0050">Antiport</keyword>
<keyword id="KW-0997">Cell inner membrane</keyword>
<keyword id="KW-1003">Cell membrane</keyword>
<keyword id="KW-0406">Ion transport</keyword>
<keyword id="KW-0472">Membrane</keyword>
<keyword id="KW-0630">Potassium</keyword>
<keyword id="KW-0633">Potassium transport</keyword>
<keyword id="KW-0812">Transmembrane</keyword>
<keyword id="KW-1133">Transmembrane helix</keyword>
<keyword id="KW-0813">Transport</keyword>
<comment type="function">
    <text evidence="1">K(+)/H(+) antiporter that extrudes potassium in exchange for external protons and maintains the internal concentration of potassium under toxic levels.</text>
</comment>
<comment type="catalytic activity">
    <reaction evidence="1">
        <text>K(+)(in) + H(+)(out) = K(+)(out) + H(+)(in)</text>
        <dbReference type="Rhea" id="RHEA:29467"/>
        <dbReference type="ChEBI" id="CHEBI:15378"/>
        <dbReference type="ChEBI" id="CHEBI:29103"/>
    </reaction>
    <physiologicalReaction direction="left-to-right" evidence="1">
        <dbReference type="Rhea" id="RHEA:29468"/>
    </physiologicalReaction>
</comment>
<comment type="subcellular location">
    <subcellularLocation>
        <location evidence="1">Cell inner membrane</location>
        <topology evidence="1">Multi-pass membrane protein</topology>
    </subcellularLocation>
</comment>
<comment type="similarity">
    <text evidence="1">Belongs to the monovalent cation:proton antiporter 1 (CPA1) transporter (TC 2.A.36) family. NhaP2 subfamily.</text>
</comment>
<comment type="sequence caution" evidence="2">
    <conflict type="erroneous initiation">
        <sequence resource="EMBL-CDS" id="ABJ14405"/>
    </conflict>
</comment>